<accession>P30044</accession>
<accession>A6NC19</accession>
<accession>A6NG06</accession>
<accession>B7ZLJ4</accession>
<accession>B7ZVW3</accession>
<accession>Q14CK0</accession>
<accession>Q6IAF2</accession>
<accession>Q9UBU5</accession>
<accession>Q9UJU4</accession>
<accession>Q9UKX4</accession>
<dbReference type="EC" id="1.11.1.24" evidence="9"/>
<dbReference type="EMBL" id="AF231705">
    <property type="protein sequence ID" value="AAF78899.1"/>
    <property type="molecule type" value="mRNA"/>
</dbReference>
<dbReference type="EMBL" id="AF124993">
    <property type="protein sequence ID" value="AAF27531.1"/>
    <property type="molecule type" value="mRNA"/>
</dbReference>
<dbReference type="EMBL" id="AF110731">
    <property type="protein sequence ID" value="AAF03750.1"/>
    <property type="molecule type" value="mRNA"/>
</dbReference>
<dbReference type="EMBL" id="AF197952">
    <property type="protein sequence ID" value="AAF04856.1"/>
    <property type="molecule type" value="mRNA"/>
</dbReference>
<dbReference type="EMBL" id="AJ249483">
    <property type="protein sequence ID" value="CAB62210.1"/>
    <property type="molecule type" value="mRNA"/>
</dbReference>
<dbReference type="EMBL" id="AF242525">
    <property type="protein sequence ID" value="AAF99605.1"/>
    <property type="molecule type" value="mRNA"/>
</dbReference>
<dbReference type="EMBL" id="AF112212">
    <property type="protein sequence ID" value="AAF17200.1"/>
    <property type="status" value="ALT_FRAME"/>
    <property type="molecule type" value="mRNA"/>
</dbReference>
<dbReference type="EMBL" id="CR457203">
    <property type="protein sequence ID" value="CAG33484.1"/>
    <property type="molecule type" value="mRNA"/>
</dbReference>
<dbReference type="EMBL" id="DQ247769">
    <property type="protein sequence ID" value="ABB05181.1"/>
    <property type="molecule type" value="Genomic_DNA"/>
</dbReference>
<dbReference type="EMBL" id="AP001453">
    <property type="status" value="NOT_ANNOTATED_CDS"/>
    <property type="molecule type" value="Genomic_DNA"/>
</dbReference>
<dbReference type="EMBL" id="AP003774">
    <property type="status" value="NOT_ANNOTATED_CDS"/>
    <property type="molecule type" value="Genomic_DNA"/>
</dbReference>
<dbReference type="EMBL" id="BC110983">
    <property type="protein sequence ID" value="AAI10984.1"/>
    <property type="molecule type" value="mRNA"/>
</dbReference>
<dbReference type="EMBL" id="BC113723">
    <property type="protein sequence ID" value="AAI13724.1"/>
    <property type="molecule type" value="mRNA"/>
</dbReference>
<dbReference type="EMBL" id="BC113725">
    <property type="protein sequence ID" value="AAI13726.1"/>
    <property type="molecule type" value="mRNA"/>
</dbReference>
<dbReference type="EMBL" id="BC143849">
    <property type="protein sequence ID" value="AAI43850.1"/>
    <property type="molecule type" value="mRNA"/>
</dbReference>
<dbReference type="EMBL" id="BC171733">
    <property type="protein sequence ID" value="AAI71733.1"/>
    <property type="molecule type" value="mRNA"/>
</dbReference>
<dbReference type="CCDS" id="CCDS8069.1">
    <molecule id="P30044-1"/>
</dbReference>
<dbReference type="CCDS" id="CCDS8070.1">
    <molecule id="P30044-3"/>
</dbReference>
<dbReference type="CCDS" id="CCDS8071.1">
    <molecule id="P30044-4"/>
</dbReference>
<dbReference type="RefSeq" id="NP_001345445.1">
    <molecule id="P30044-2"/>
    <property type="nucleotide sequence ID" value="NM_001358516.2"/>
</dbReference>
<dbReference type="RefSeq" id="NP_036226.2">
    <molecule id="P30044-1"/>
    <property type="nucleotide sequence ID" value="NM_012094.5"/>
</dbReference>
<dbReference type="RefSeq" id="NP_857634.2">
    <molecule id="P30044-3"/>
    <property type="nucleotide sequence ID" value="NM_181651.3"/>
</dbReference>
<dbReference type="RefSeq" id="NP_857635.2">
    <molecule id="P30044-4"/>
    <property type="nucleotide sequence ID" value="NM_181652.3"/>
</dbReference>
<dbReference type="PDB" id="1H4O">
    <property type="method" value="X-ray"/>
    <property type="resolution" value="1.95 A"/>
    <property type="chains" value="A/B/C/D/E/F/G/H=54-214"/>
</dbReference>
<dbReference type="PDB" id="1HD2">
    <property type="method" value="X-ray"/>
    <property type="resolution" value="1.50 A"/>
    <property type="chains" value="A=54-214"/>
</dbReference>
<dbReference type="PDB" id="1OC3">
    <property type="method" value="X-ray"/>
    <property type="resolution" value="2.00 A"/>
    <property type="chains" value="A/B/C=54-214"/>
</dbReference>
<dbReference type="PDB" id="1URM">
    <property type="method" value="X-ray"/>
    <property type="resolution" value="1.70 A"/>
    <property type="chains" value="A=54-214"/>
</dbReference>
<dbReference type="PDB" id="2VL2">
    <property type="method" value="X-ray"/>
    <property type="resolution" value="1.92 A"/>
    <property type="chains" value="A/B/C=54-214"/>
</dbReference>
<dbReference type="PDB" id="2VL3">
    <property type="method" value="X-ray"/>
    <property type="resolution" value="1.83 A"/>
    <property type="chains" value="A/B/C=54-214"/>
</dbReference>
<dbReference type="PDB" id="2VL9">
    <property type="method" value="X-ray"/>
    <property type="resolution" value="2.70 A"/>
    <property type="chains" value="A/B/C/D=54-214"/>
</dbReference>
<dbReference type="PDB" id="3MNG">
    <property type="method" value="X-ray"/>
    <property type="resolution" value="1.45 A"/>
    <property type="chains" value="A=54-214"/>
</dbReference>
<dbReference type="PDB" id="4K7I">
    <property type="method" value="X-ray"/>
    <property type="resolution" value="2.25 A"/>
    <property type="chains" value="A/B/C=54-214"/>
</dbReference>
<dbReference type="PDB" id="4K7N">
    <property type="method" value="X-ray"/>
    <property type="resolution" value="2.30 A"/>
    <property type="chains" value="A/B/C=54-214"/>
</dbReference>
<dbReference type="PDB" id="4K7O">
    <property type="method" value="X-ray"/>
    <property type="resolution" value="1.98 A"/>
    <property type="chains" value="A/B/C=54-214"/>
</dbReference>
<dbReference type="PDB" id="4MMM">
    <property type="method" value="X-ray"/>
    <property type="resolution" value="1.47 A"/>
    <property type="chains" value="A/C/E/G=54-214"/>
</dbReference>
<dbReference type="PDBsum" id="1H4O"/>
<dbReference type="PDBsum" id="1HD2"/>
<dbReference type="PDBsum" id="1OC3"/>
<dbReference type="PDBsum" id="1URM"/>
<dbReference type="PDBsum" id="2VL2"/>
<dbReference type="PDBsum" id="2VL3"/>
<dbReference type="PDBsum" id="2VL9"/>
<dbReference type="PDBsum" id="3MNG"/>
<dbReference type="PDBsum" id="4K7I"/>
<dbReference type="PDBsum" id="4K7N"/>
<dbReference type="PDBsum" id="4K7O"/>
<dbReference type="PDBsum" id="4MMM"/>
<dbReference type="SMR" id="P30044"/>
<dbReference type="BioGRID" id="117352">
    <property type="interactions" value="183"/>
</dbReference>
<dbReference type="FunCoup" id="P30044">
    <property type="interactions" value="1692"/>
</dbReference>
<dbReference type="IntAct" id="P30044">
    <property type="interactions" value="60"/>
</dbReference>
<dbReference type="MINT" id="P30044"/>
<dbReference type="STRING" id="9606.ENSP00000265462"/>
<dbReference type="ChEMBL" id="CHEMBL3627586"/>
<dbReference type="DrugBank" id="DB00995">
    <property type="generic name" value="Auranofin"/>
</dbReference>
<dbReference type="DrugBank" id="DB03608">
    <property type="generic name" value="Diminazene"/>
</dbReference>
<dbReference type="DrugBank" id="DB05428">
    <property type="generic name" value="Motexafin gadolinium"/>
</dbReference>
<dbReference type="DrugBank" id="DB09221">
    <property type="generic name" value="Polaprezinc"/>
</dbReference>
<dbReference type="PeroxiBase" id="4448">
    <property type="entry name" value="HsPrxV"/>
</dbReference>
<dbReference type="GlyGen" id="P30044">
    <property type="glycosylation" value="1 site, 1 O-linked glycan (1 site)"/>
</dbReference>
<dbReference type="iPTMnet" id="P30044"/>
<dbReference type="MetOSite" id="P30044"/>
<dbReference type="PhosphoSitePlus" id="P30044"/>
<dbReference type="SwissPalm" id="P30044"/>
<dbReference type="BioMuta" id="PRDX5"/>
<dbReference type="DMDM" id="317373539"/>
<dbReference type="OGP" id="P30044"/>
<dbReference type="REPRODUCTION-2DPAGE" id="IPI00759663"/>
<dbReference type="CPTAC" id="CPTAC-572"/>
<dbReference type="jPOST" id="P30044"/>
<dbReference type="MassIVE" id="P30044"/>
<dbReference type="PaxDb" id="9606-ENSP00000265462"/>
<dbReference type="PeptideAtlas" id="P30044"/>
<dbReference type="PRIDE" id="P30044"/>
<dbReference type="ProteomicsDB" id="1092"/>
<dbReference type="ProteomicsDB" id="54624">
    <molecule id="P30044-1"/>
</dbReference>
<dbReference type="ProteomicsDB" id="54625">
    <molecule id="P30044-2"/>
</dbReference>
<dbReference type="ProteomicsDB" id="797"/>
<dbReference type="Pumba" id="P30044"/>
<dbReference type="TopDownProteomics" id="P30044-1">
    <molecule id="P30044-1"/>
</dbReference>
<dbReference type="TopDownProteomics" id="P30044-2">
    <molecule id="P30044-2"/>
</dbReference>
<dbReference type="Antibodypedia" id="3276">
    <property type="antibodies" value="449 antibodies from 38 providers"/>
</dbReference>
<dbReference type="DNASU" id="25824"/>
<dbReference type="Ensembl" id="ENST00000265462.9">
    <molecule id="P30044-1"/>
    <property type="protein sequence ID" value="ENSP00000265462.4"/>
    <property type="gene ID" value="ENSG00000126432.14"/>
</dbReference>
<dbReference type="Ensembl" id="ENST00000347941.4">
    <molecule id="P30044-4"/>
    <property type="protein sequence ID" value="ENSP00000335363.6"/>
    <property type="gene ID" value="ENSG00000126432.14"/>
</dbReference>
<dbReference type="Ensembl" id="ENST00000352435.8">
    <molecule id="P30044-3"/>
    <property type="protein sequence ID" value="ENSP00000335334.6"/>
    <property type="gene ID" value="ENSG00000126432.14"/>
</dbReference>
<dbReference type="GeneID" id="25824"/>
<dbReference type="KEGG" id="hsa:25824"/>
<dbReference type="MANE-Select" id="ENST00000265462.9">
    <property type="protein sequence ID" value="ENSP00000265462.4"/>
    <property type="RefSeq nucleotide sequence ID" value="NM_012094.5"/>
    <property type="RefSeq protein sequence ID" value="NP_036226.2"/>
</dbReference>
<dbReference type="UCSC" id="uc001nzu.4">
    <molecule id="P30044-1"/>
    <property type="organism name" value="human"/>
</dbReference>
<dbReference type="AGR" id="HGNC:9355"/>
<dbReference type="CTD" id="25824"/>
<dbReference type="DisGeNET" id="25824"/>
<dbReference type="GeneCards" id="PRDX5"/>
<dbReference type="HGNC" id="HGNC:9355">
    <property type="gene designation" value="PRDX5"/>
</dbReference>
<dbReference type="HPA" id="ENSG00000126432">
    <property type="expression patterns" value="Tissue enhanced (choroid)"/>
</dbReference>
<dbReference type="MIM" id="606583">
    <property type="type" value="gene"/>
</dbReference>
<dbReference type="neXtProt" id="NX_P30044"/>
<dbReference type="OpenTargets" id="ENSG00000126432"/>
<dbReference type="PharmGKB" id="PA33726"/>
<dbReference type="VEuPathDB" id="HostDB:ENSG00000126432"/>
<dbReference type="eggNOG" id="KOG0541">
    <property type="taxonomic scope" value="Eukaryota"/>
</dbReference>
<dbReference type="GeneTree" id="ENSGT00390000018173"/>
<dbReference type="HOGENOM" id="CLU_072440_3_1_1"/>
<dbReference type="InParanoid" id="P30044"/>
<dbReference type="OMA" id="SAWGKQH"/>
<dbReference type="OrthoDB" id="1882547at2759"/>
<dbReference type="PAN-GO" id="P30044">
    <property type="GO annotations" value="7 GO annotations based on evolutionary models"/>
</dbReference>
<dbReference type="PhylomeDB" id="P30044"/>
<dbReference type="TreeFam" id="TF105182"/>
<dbReference type="BioCyc" id="MetaCyc:HS05016-MONOMER"/>
<dbReference type="BRENDA" id="1.11.1.24">
    <property type="organism ID" value="2681"/>
</dbReference>
<dbReference type="PathwayCommons" id="P30044"/>
<dbReference type="Reactome" id="R-HSA-3299685">
    <property type="pathway name" value="Detoxification of Reactive Oxygen Species"/>
</dbReference>
<dbReference type="Reactome" id="R-HSA-5628897">
    <molecule id="P30044-2"/>
    <property type="pathway name" value="TP53 Regulates Metabolic Genes"/>
</dbReference>
<dbReference type="SignaLink" id="P30044"/>
<dbReference type="SIGNOR" id="P30044"/>
<dbReference type="BioGRID-ORCS" id="25824">
    <property type="hits" value="16 hits in 1174 CRISPR screens"/>
</dbReference>
<dbReference type="CD-CODE" id="91857CE7">
    <property type="entry name" value="Nucleolus"/>
</dbReference>
<dbReference type="CD-CODE" id="FB4E32DD">
    <property type="entry name" value="Presynaptic clusters and postsynaptic densities"/>
</dbReference>
<dbReference type="ChiTaRS" id="PRDX5">
    <property type="organism name" value="human"/>
</dbReference>
<dbReference type="EvolutionaryTrace" id="P30044"/>
<dbReference type="GeneWiki" id="PRDX5"/>
<dbReference type="GenomeRNAi" id="25824"/>
<dbReference type="Pharos" id="P30044">
    <property type="development level" value="Tbio"/>
</dbReference>
<dbReference type="PRO" id="PR:P30044"/>
<dbReference type="Proteomes" id="UP000005640">
    <property type="component" value="Chromosome 11"/>
</dbReference>
<dbReference type="RNAct" id="P30044">
    <property type="molecule type" value="protein"/>
</dbReference>
<dbReference type="Bgee" id="ENSG00000126432">
    <property type="expression patterns" value="Expressed in bronchial epithelial cell and 183 other cell types or tissues"/>
</dbReference>
<dbReference type="GO" id="GO:0005737">
    <property type="term" value="C:cytoplasm"/>
    <property type="evidence" value="ECO:0000314"/>
    <property type="project" value="UniProtKB"/>
</dbReference>
<dbReference type="GO" id="GO:0031410">
    <property type="term" value="C:cytoplasmic vesicle"/>
    <property type="evidence" value="ECO:0000314"/>
    <property type="project" value="UniProtKB"/>
</dbReference>
<dbReference type="GO" id="GO:0005829">
    <property type="term" value="C:cytosol"/>
    <property type="evidence" value="ECO:0000314"/>
    <property type="project" value="UniProtKB"/>
</dbReference>
<dbReference type="GO" id="GO:0070062">
    <property type="term" value="C:extracellular exosome"/>
    <property type="evidence" value="ECO:0007005"/>
    <property type="project" value="UniProtKB"/>
</dbReference>
<dbReference type="GO" id="GO:0005615">
    <property type="term" value="C:extracellular space"/>
    <property type="evidence" value="ECO:0007005"/>
    <property type="project" value="UniProtKB"/>
</dbReference>
<dbReference type="GO" id="GO:0043231">
    <property type="term" value="C:intracellular membrane-bounded organelle"/>
    <property type="evidence" value="ECO:0000314"/>
    <property type="project" value="UniProtKB"/>
</dbReference>
<dbReference type="GO" id="GO:0005759">
    <property type="term" value="C:mitochondrial matrix"/>
    <property type="evidence" value="ECO:0000304"/>
    <property type="project" value="Reactome"/>
</dbReference>
<dbReference type="GO" id="GO:0005739">
    <property type="term" value="C:mitochondrion"/>
    <property type="evidence" value="ECO:0000314"/>
    <property type="project" value="HPA"/>
</dbReference>
<dbReference type="GO" id="GO:0005634">
    <property type="term" value="C:nucleus"/>
    <property type="evidence" value="ECO:0000314"/>
    <property type="project" value="UniProtKB"/>
</dbReference>
<dbReference type="GO" id="GO:0048471">
    <property type="term" value="C:perinuclear region of cytoplasm"/>
    <property type="evidence" value="ECO:0000314"/>
    <property type="project" value="UniProtKB"/>
</dbReference>
<dbReference type="GO" id="GO:0005782">
    <property type="term" value="C:peroxisomal matrix"/>
    <property type="evidence" value="ECO:0000314"/>
    <property type="project" value="UniProtKB"/>
</dbReference>
<dbReference type="GO" id="GO:0005777">
    <property type="term" value="C:peroxisome"/>
    <property type="evidence" value="ECO:0000314"/>
    <property type="project" value="UniProtKB"/>
</dbReference>
<dbReference type="GO" id="GO:0016209">
    <property type="term" value="F:antioxidant activity"/>
    <property type="evidence" value="ECO:0000314"/>
    <property type="project" value="UniProtKB"/>
</dbReference>
<dbReference type="GO" id="GO:0043027">
    <property type="term" value="F:cysteine-type endopeptidase inhibitor activity involved in apoptotic process"/>
    <property type="evidence" value="ECO:0000315"/>
    <property type="project" value="UniProtKB"/>
</dbReference>
<dbReference type="GO" id="GO:0042802">
    <property type="term" value="F:identical protein binding"/>
    <property type="evidence" value="ECO:0000353"/>
    <property type="project" value="IntAct"/>
</dbReference>
<dbReference type="GO" id="GO:0004601">
    <property type="term" value="F:peroxidase activity"/>
    <property type="evidence" value="ECO:0000314"/>
    <property type="project" value="UniProtKB"/>
</dbReference>
<dbReference type="GO" id="GO:0072541">
    <property type="term" value="F:peroxynitrite reductase activity"/>
    <property type="evidence" value="ECO:0000314"/>
    <property type="project" value="UniProtKB"/>
</dbReference>
<dbReference type="GO" id="GO:0001016">
    <property type="term" value="F:RNA polymerase III transcription regulatory region sequence-specific DNA binding"/>
    <property type="evidence" value="ECO:0000314"/>
    <property type="project" value="UniProtKB"/>
</dbReference>
<dbReference type="GO" id="GO:0005102">
    <property type="term" value="F:signaling receptor binding"/>
    <property type="evidence" value="ECO:0000353"/>
    <property type="project" value="UniProtKB"/>
</dbReference>
<dbReference type="GO" id="GO:0008379">
    <property type="term" value="F:thioredoxin peroxidase activity"/>
    <property type="evidence" value="ECO:0000314"/>
    <property type="project" value="UniProtKB"/>
</dbReference>
<dbReference type="GO" id="GO:0045454">
    <property type="term" value="P:cell redox homeostasis"/>
    <property type="evidence" value="ECO:0000318"/>
    <property type="project" value="GO_Central"/>
</dbReference>
<dbReference type="GO" id="GO:0034599">
    <property type="term" value="P:cellular response to oxidative stress"/>
    <property type="evidence" value="ECO:0000318"/>
    <property type="project" value="GO_Central"/>
</dbReference>
<dbReference type="GO" id="GO:0034614">
    <property type="term" value="P:cellular response to reactive oxygen species"/>
    <property type="evidence" value="ECO:0000315"/>
    <property type="project" value="UniProtKB"/>
</dbReference>
<dbReference type="GO" id="GO:0042744">
    <property type="term" value="P:hydrogen peroxide catabolic process"/>
    <property type="evidence" value="ECO:0000314"/>
    <property type="project" value="UniProtKB"/>
</dbReference>
<dbReference type="GO" id="GO:0006954">
    <property type="term" value="P:inflammatory response"/>
    <property type="evidence" value="ECO:0000304"/>
    <property type="project" value="UniProtKB"/>
</dbReference>
<dbReference type="GO" id="GO:0043066">
    <property type="term" value="P:negative regulation of apoptotic process"/>
    <property type="evidence" value="ECO:0000315"/>
    <property type="project" value="UniProtKB"/>
</dbReference>
<dbReference type="GO" id="GO:0051354">
    <property type="term" value="P:negative regulation of oxidoreductase activity"/>
    <property type="evidence" value="ECO:0000314"/>
    <property type="project" value="UniProtKB"/>
</dbReference>
<dbReference type="GO" id="GO:0016480">
    <property type="term" value="P:negative regulation of transcription by RNA polymerase III"/>
    <property type="evidence" value="ECO:0000314"/>
    <property type="project" value="UniProtKB"/>
</dbReference>
<dbReference type="GO" id="GO:0032967">
    <property type="term" value="P:positive regulation of collagen biosynthetic process"/>
    <property type="evidence" value="ECO:0000314"/>
    <property type="project" value="UniProtKB"/>
</dbReference>
<dbReference type="GO" id="GO:2001057">
    <property type="term" value="P:reactive nitrogen species metabolic process"/>
    <property type="evidence" value="ECO:0000314"/>
    <property type="project" value="UniProtKB"/>
</dbReference>
<dbReference type="GO" id="GO:0060785">
    <property type="term" value="P:regulation of apoptosis involved in tissue homeostasis"/>
    <property type="evidence" value="ECO:0000314"/>
    <property type="project" value="UniProtKB"/>
</dbReference>
<dbReference type="GO" id="GO:0006979">
    <property type="term" value="P:response to oxidative stress"/>
    <property type="evidence" value="ECO:0000314"/>
    <property type="project" value="UniProtKB"/>
</dbReference>
<dbReference type="CDD" id="cd03013">
    <property type="entry name" value="PRX5_like"/>
    <property type="match status" value="1"/>
</dbReference>
<dbReference type="FunFam" id="3.40.30.10:FF:000020">
    <property type="entry name" value="Peroxiredoxin"/>
    <property type="match status" value="1"/>
</dbReference>
<dbReference type="Gene3D" id="3.40.30.10">
    <property type="entry name" value="Glutaredoxin"/>
    <property type="match status" value="1"/>
</dbReference>
<dbReference type="InterPro" id="IPR037944">
    <property type="entry name" value="PRX5-like"/>
</dbReference>
<dbReference type="InterPro" id="IPR013740">
    <property type="entry name" value="Redoxin"/>
</dbReference>
<dbReference type="InterPro" id="IPR036249">
    <property type="entry name" value="Thioredoxin-like_sf"/>
</dbReference>
<dbReference type="InterPro" id="IPR013766">
    <property type="entry name" value="Thioredoxin_domain"/>
</dbReference>
<dbReference type="PANTHER" id="PTHR10430">
    <property type="entry name" value="PEROXIREDOXIN"/>
    <property type="match status" value="1"/>
</dbReference>
<dbReference type="PANTHER" id="PTHR10430:SF16">
    <property type="entry name" value="PEROXIREDOXIN-5, MITOCHONDRIAL"/>
    <property type="match status" value="1"/>
</dbReference>
<dbReference type="Pfam" id="PF08534">
    <property type="entry name" value="Redoxin"/>
    <property type="match status" value="1"/>
</dbReference>
<dbReference type="SUPFAM" id="SSF52833">
    <property type="entry name" value="Thioredoxin-like"/>
    <property type="match status" value="1"/>
</dbReference>
<dbReference type="PROSITE" id="PS51352">
    <property type="entry name" value="THIOREDOXIN_2"/>
    <property type="match status" value="1"/>
</dbReference>
<keyword id="KW-0002">3D-structure</keyword>
<keyword id="KW-0007">Acetylation</keyword>
<keyword id="KW-0024">Alternative initiation</keyword>
<keyword id="KW-0025">Alternative splicing</keyword>
<keyword id="KW-0049">Antioxidant</keyword>
<keyword id="KW-0963">Cytoplasm</keyword>
<keyword id="KW-0903">Direct protein sequencing</keyword>
<keyword id="KW-1015">Disulfide bond</keyword>
<keyword id="KW-0449">Lipoprotein</keyword>
<keyword id="KW-0496">Mitochondrion</keyword>
<keyword id="KW-0560">Oxidoreductase</keyword>
<keyword id="KW-0564">Palmitate</keyword>
<keyword id="KW-0575">Peroxidase</keyword>
<keyword id="KW-0576">Peroxisome</keyword>
<keyword id="KW-0597">Phosphoprotein</keyword>
<keyword id="KW-1267">Proteomics identification</keyword>
<keyword id="KW-0676">Redox-active center</keyword>
<keyword id="KW-1185">Reference proteome</keyword>
<keyword id="KW-0809">Transit peptide</keyword>
<reference key="1">
    <citation type="journal article" date="1999" name="Eur. J. Biochem.">
        <title>A novel human DNA-binding protein with sequence similarity to a subfamily of redox proteins which is able to repress RNA-polymerase-III-driven transcription of the Alu-family retroposons in vitro.</title>
        <authorList>
            <person name="Kropotov A."/>
            <person name="Sedova V."/>
            <person name="Ivanov V."/>
            <person name="Sazeeva N."/>
            <person name="Tomilin A."/>
            <person name="Krutilina R."/>
            <person name="Oei S.L."/>
            <person name="Griesenbeck J."/>
            <person name="Buchlow G."/>
            <person name="Tomilin N."/>
        </authorList>
    </citation>
    <scope>NUCLEOTIDE SEQUENCE [MRNA] (ISOFORM MITOCHONDRIAL)</scope>
    <scope>VARIANT CYS-33</scope>
</reference>
<reference key="2">
    <citation type="journal article" date="1999" name="J. Biol. Chem.">
        <title>Characterization of human and murine PMP20 peroxisomal proteins that exhibit antioxidant activity in vitro.</title>
        <authorList>
            <person name="Yamashita H."/>
            <person name="Avraham S."/>
            <person name="Jiang S."/>
            <person name="London R."/>
            <person name="Van Veldhoven P.P."/>
            <person name="Subramani S."/>
            <person name="Rogers R.A."/>
            <person name="Avraham H."/>
        </authorList>
    </citation>
    <scope>NUCLEOTIDE SEQUENCE [MRNA] (ISOFORM CYTOPLASMIC+PEROXISOMAL)</scope>
    <scope>FUNCTION</scope>
    <scope>SUBCELLULAR LOCATION</scope>
</reference>
<reference key="3">
    <citation type="journal article" date="1999" name="J. Biol. Chem.">
        <title>Cloning and characterization of AOEB166, a novel mammalian antioxidant enzyme of the peroxiredoxin family.</title>
        <authorList>
            <person name="Knoops B."/>
            <person name="Clippe A."/>
            <person name="Bogard C."/>
            <person name="Arsalane K."/>
            <person name="Wattiez R."/>
            <person name="Hermans C."/>
            <person name="Duconseille E."/>
            <person name="Falmagne P."/>
            <person name="Bernard A."/>
        </authorList>
    </citation>
    <scope>NUCLEOTIDE SEQUENCE [MRNA] (ISOFORM MITOCHONDRIAL)</scope>
    <scope>PROTEIN SEQUENCE OF 54-90</scope>
    <scope>FUNCTION</scope>
    <scope>TISSUE SPECIFICITY</scope>
    <scope>SUBCELLULAR LOCATION</scope>
    <scope>VARIANT CYS-33</scope>
    <source>
        <tissue>Lung</tissue>
    </source>
</reference>
<reference key="4">
    <citation type="journal article" date="2000" name="Biochem. Biophys. Res. Commun.">
        <title>Mouse peroxiredoxin V is a thioredoxin peroxidase that inhibits p53-induced apoptosis.</title>
        <authorList>
            <person name="Zhou Y."/>
            <person name="Kok K.H."/>
            <person name="Chun A.C.S."/>
            <person name="Wong C.M."/>
            <person name="Wu H.W."/>
            <person name="Lin M.C.M."/>
            <person name="Fung P.C.W."/>
            <person name="Kung H.-F."/>
            <person name="Jin D.-Y."/>
        </authorList>
    </citation>
    <scope>NUCLEOTIDE SEQUENCE [MRNA] (ISOFORM CYTOPLASMIC+PEROXISOMAL)</scope>
    <scope>VARIANT CYS-33</scope>
</reference>
<reference key="5">
    <citation type="journal article" date="2000" name="J. Biol. Chem.">
        <title>Identification of a new type of mammalian peroxiredoxin that forms an intramolecular disulfide as a reaction intermediate.</title>
        <authorList>
            <person name="Seo M.S."/>
            <person name="Kang S.W."/>
            <person name="Kim K."/>
            <person name="Baines I.C."/>
            <person name="Lee T.H."/>
            <person name="Rhee S.G."/>
        </authorList>
    </citation>
    <scope>NUCLEOTIDE SEQUENCE [MRNA]</scope>
    <scope>FUNCTION</scope>
    <scope>CATALYTIC ACTIVITY</scope>
    <scope>MUTAGENESIS OF CYS-100; CYS-125 AND CYS-204</scope>
    <scope>ACTIVE SITE</scope>
    <scope>DISULFIDE BOND</scope>
    <scope>SUBCELLULAR LOCATION</scope>
</reference>
<reference key="6">
    <citation type="submission" date="1999-09" db="EMBL/GenBank/DDBJ databases">
        <title>A new type of human thiol peroxidase (Human TPx type VI).</title>
        <authorList>
            <person name="Kim I.H."/>
            <person name="Jeong W."/>
        </authorList>
    </citation>
    <scope>NUCLEOTIDE SEQUENCE [MRNA] (ISOFORM CYTOPLASMIC+PEROXISOMAL)</scope>
</reference>
<reference key="7">
    <citation type="submission" date="2000-03" db="EMBL/GenBank/DDBJ databases">
        <authorList>
            <person name="Zhang W."/>
            <person name="Li N."/>
            <person name="Wan T."/>
            <person name="Cao X."/>
        </authorList>
    </citation>
    <scope>NUCLEOTIDE SEQUENCE [MRNA] (ISOFORM MITOCHONDRIAL)</scope>
    <scope>VARIANT CYS-33</scope>
</reference>
<reference key="8">
    <citation type="journal article" date="2000" name="Proc. Natl. Acad. Sci. U.S.A.">
        <title>Gene expression profiling in the human hypothalamus-pituitary-adrenal axis and full-length cDNA cloning.</title>
        <authorList>
            <person name="Hu R.-M."/>
            <person name="Han Z.-G."/>
            <person name="Song H.-D."/>
            <person name="Peng Y.-D."/>
            <person name="Huang Q.-H."/>
            <person name="Ren S.-X."/>
            <person name="Gu Y.-J."/>
            <person name="Huang C.-H."/>
            <person name="Li Y.-B."/>
            <person name="Jiang C.-L."/>
            <person name="Fu G."/>
            <person name="Zhang Q.-H."/>
            <person name="Gu B.-W."/>
            <person name="Dai M."/>
            <person name="Mao Y.-F."/>
            <person name="Gao G.-F."/>
            <person name="Rong R."/>
            <person name="Ye M."/>
            <person name="Zhou J."/>
            <person name="Xu S.-H."/>
            <person name="Gu J."/>
            <person name="Shi J.-X."/>
            <person name="Jin W.-R."/>
            <person name="Zhang C.-K."/>
            <person name="Wu T.-M."/>
            <person name="Huang G.-Y."/>
            <person name="Chen Z."/>
            <person name="Chen M.-D."/>
            <person name="Chen J.-L."/>
        </authorList>
    </citation>
    <scope>NUCLEOTIDE SEQUENCE [LARGE SCALE MRNA] (ISOFORM CYTOPLASMIC+PEROXISOMAL)</scope>
    <source>
        <tissue>Adrenal gland</tissue>
    </source>
</reference>
<reference key="9">
    <citation type="submission" date="2004-06" db="EMBL/GenBank/DDBJ databases">
        <title>Cloning of human full open reading frames in Gateway(TM) system entry vector (pDONR201).</title>
        <authorList>
            <person name="Ebert L."/>
            <person name="Schick M."/>
            <person name="Neubert P."/>
            <person name="Schatten R."/>
            <person name="Henze S."/>
            <person name="Korn B."/>
        </authorList>
    </citation>
    <scope>NUCLEOTIDE SEQUENCE [LARGE SCALE MRNA] (ISOFORM MITOCHONDRIAL)</scope>
    <scope>VARIANT CYS-33</scope>
</reference>
<reference key="10">
    <citation type="submission" date="2005-10" db="EMBL/GenBank/DDBJ databases">
        <authorList>
            <consortium name="NIEHS SNPs program"/>
        </authorList>
    </citation>
    <scope>NUCLEOTIDE SEQUENCE [GENOMIC DNA]</scope>
    <scope>VARIANT CYS-33</scope>
</reference>
<reference key="11">
    <citation type="journal article" date="2006" name="Nature">
        <title>Human chromosome 11 DNA sequence and analysis including novel gene identification.</title>
        <authorList>
            <person name="Taylor T.D."/>
            <person name="Noguchi H."/>
            <person name="Totoki Y."/>
            <person name="Toyoda A."/>
            <person name="Kuroki Y."/>
            <person name="Dewar K."/>
            <person name="Lloyd C."/>
            <person name="Itoh T."/>
            <person name="Takeda T."/>
            <person name="Kim D.-W."/>
            <person name="She X."/>
            <person name="Barlow K.F."/>
            <person name="Bloom T."/>
            <person name="Bruford E."/>
            <person name="Chang J.L."/>
            <person name="Cuomo C.A."/>
            <person name="Eichler E."/>
            <person name="FitzGerald M.G."/>
            <person name="Jaffe D.B."/>
            <person name="LaButti K."/>
            <person name="Nicol R."/>
            <person name="Park H.-S."/>
            <person name="Seaman C."/>
            <person name="Sougnez C."/>
            <person name="Yang X."/>
            <person name="Zimmer A.R."/>
            <person name="Zody M.C."/>
            <person name="Birren B.W."/>
            <person name="Nusbaum C."/>
            <person name="Fujiyama A."/>
            <person name="Hattori M."/>
            <person name="Rogers J."/>
            <person name="Lander E.S."/>
            <person name="Sakaki Y."/>
        </authorList>
    </citation>
    <scope>NUCLEOTIDE SEQUENCE [LARGE SCALE GENOMIC DNA]</scope>
</reference>
<reference key="12">
    <citation type="journal article" date="2004" name="Genome Res.">
        <title>The status, quality, and expansion of the NIH full-length cDNA project: the Mammalian Gene Collection (MGC).</title>
        <authorList>
            <consortium name="The MGC Project Team"/>
        </authorList>
    </citation>
    <scope>NUCLEOTIDE SEQUENCE [LARGE SCALE MRNA] (ISOFORMS MITOCHONDRIAL; 3 AND 4)</scope>
    <scope>VARIANT CYS-33</scope>
    <source>
        <tissue>Brain</tissue>
        <tissue>Medulla oblongata</tissue>
    </source>
</reference>
<reference key="13">
    <citation type="journal article" date="1992" name="Electrophoresis">
        <title>Human liver protein map: a reference database established by microsequencing and gel comparison.</title>
        <authorList>
            <person name="Hochstrasser D.F."/>
            <person name="Frutiger S."/>
            <person name="Paquet N."/>
            <person name="Bairoch A."/>
            <person name="Ravier F."/>
            <person name="Pasquali C."/>
            <person name="Sanchez J.-C."/>
            <person name="Tissot J.-D."/>
            <person name="Bjellqvist B."/>
            <person name="Vargas R."/>
            <person name="Appel R.D."/>
            <person name="Hughes G.J."/>
        </authorList>
    </citation>
    <scope>PROTEIN SEQUENCE OF 54-63</scope>
    <source>
        <tissue>Liver</tissue>
    </source>
</reference>
<reference key="14">
    <citation type="journal article" date="2009" name="Science">
        <title>Lysine acetylation targets protein complexes and co-regulates major cellular functions.</title>
        <authorList>
            <person name="Choudhary C."/>
            <person name="Kumar C."/>
            <person name="Gnad F."/>
            <person name="Nielsen M.L."/>
            <person name="Rehman M."/>
            <person name="Walther T.C."/>
            <person name="Olsen J.V."/>
            <person name="Mann M."/>
        </authorList>
    </citation>
    <scope>ACETYLATION [LARGE SCALE ANALYSIS] AT LYS-83</scope>
    <scope>IDENTIFICATION BY MASS SPECTROMETRY [LARGE SCALE ANALYSIS]</scope>
</reference>
<reference key="15">
    <citation type="journal article" date="2011" name="BMC Syst. Biol.">
        <title>Initial characterization of the human central proteome.</title>
        <authorList>
            <person name="Burkard T.R."/>
            <person name="Planyavsky M."/>
            <person name="Kaupe I."/>
            <person name="Breitwieser F.P."/>
            <person name="Buerckstuemmer T."/>
            <person name="Bennett K.L."/>
            <person name="Superti-Furga G."/>
            <person name="Colinge J."/>
        </authorList>
    </citation>
    <scope>IDENTIFICATION BY MASS SPECTROMETRY [LARGE SCALE ANALYSIS]</scope>
</reference>
<reference key="16">
    <citation type="journal article" date="2014" name="J. Proteomics">
        <title>An enzyme assisted RP-RPLC approach for in-depth analysis of human liver phosphoproteome.</title>
        <authorList>
            <person name="Bian Y."/>
            <person name="Song C."/>
            <person name="Cheng K."/>
            <person name="Dong M."/>
            <person name="Wang F."/>
            <person name="Huang J."/>
            <person name="Sun D."/>
            <person name="Wang L."/>
            <person name="Ye M."/>
            <person name="Zou H."/>
        </authorList>
    </citation>
    <scope>IDENTIFICATION BY MASS SPECTROMETRY [LARGE SCALE ANALYSIS]</scope>
    <source>
        <tissue>Liver</tissue>
    </source>
</reference>
<reference key="17">
    <citation type="journal article" date="2015" name="Proteomics">
        <title>N-terminome analysis of the human mitochondrial proteome.</title>
        <authorList>
            <person name="Vaca Jacome A.S."/>
            <person name="Rabilloud T."/>
            <person name="Schaeffer-Reiss C."/>
            <person name="Rompais M."/>
            <person name="Ayoub D."/>
            <person name="Lane L."/>
            <person name="Bairoch A."/>
            <person name="Van Dorsselaer A."/>
            <person name="Carapito C."/>
        </authorList>
    </citation>
    <scope>IDENTIFICATION BY MASS SPECTROMETRY [LARGE SCALE ANALYSIS]</scope>
</reference>
<reference key="18">
    <citation type="journal article" date="2001" name="J. Mol. Biol.">
        <title>Crystal structure of human peroxiredoxin 5, a novel type of mammalian peroxiredoxin at 1.5-A resolution.</title>
        <authorList>
            <person name="Declercq J.-P."/>
            <person name="Evrard C."/>
            <person name="Clippe A."/>
            <person name="Stricht D.V."/>
            <person name="Bernard A."/>
            <person name="Knoops B."/>
        </authorList>
    </citation>
    <scope>X-RAY CRYSTALLOGRAPHY (1.5 ANGSTROMS)</scope>
</reference>
<reference key="19">
    <citation type="journal article" date="2008" name="Arch. Biochem. Biophys.">
        <title>The crystal structures of oxidized forms of human peroxiredoxin 5 with an intramolecular disulfide bond confirm the proposed enzymatic mechanism for atypical 2-Cys peroxiredoxins.</title>
        <authorList>
            <person name="Smeets A."/>
            <person name="Marchand C."/>
            <person name="Linard D."/>
            <person name="Knoops B."/>
            <person name="Declercq J.P."/>
        </authorList>
    </citation>
    <scope>X-RAY CRYSTALLOGRAPHY (1.83 ANGSTROMS) OF 54-214</scope>
    <scope>DISULFIDE BOND</scope>
</reference>
<reference key="20">
    <citation type="journal article" date="2010" name="J. Mol. Biol.">
        <title>Structural evidence that peroxiredoxin catalytic power is based on transition-state stabilization.</title>
        <authorList>
            <person name="Hall A."/>
            <person name="Parsonage D."/>
            <person name="Poole L.B."/>
            <person name="Karplus P.A."/>
        </authorList>
    </citation>
    <scope>X-RAY CRYSTALLOGRAPHY (1.45 ANGSTROMS) OF 54-214 IN COMPLEX WITH DITHIOTHREITOL</scope>
    <scope>ACTIVE SITE</scope>
</reference>
<reference key="21">
    <citation type="journal article" date="2019" name="Nat. Chem. Biol.">
        <title>ABHD10 is an S-depalmitoylase affecting redox homeostasis through peroxiredoxin-5.</title>
        <authorList>
            <person name="Cao Y."/>
            <person name="Qiu T."/>
            <person name="Kathayat R.S."/>
            <person name="Azizi S.A."/>
            <person name="Thorne A.K."/>
            <person name="Ahn D."/>
            <person name="Fukata Y."/>
            <person name="Fukata M."/>
            <person name="Rice P.A."/>
            <person name="Dickinson B.C."/>
        </authorList>
    </citation>
    <scope>FUNCTION</scope>
    <scope>SUBCELLULAR LOCATION</scope>
    <scope>PALMITOYLATION AT CYS-100</scope>
    <scope>MUTAGENESIS OF CYS-100; CYS-125 AND CYS-204</scope>
</reference>
<reference key="22">
    <citation type="journal article" date="2006" name="Science">
        <title>The consensus coding sequences of human breast and colorectal cancers.</title>
        <authorList>
            <person name="Sjoeblom T."/>
            <person name="Jones S."/>
            <person name="Wood L.D."/>
            <person name="Parsons D.W."/>
            <person name="Lin J."/>
            <person name="Barber T.D."/>
            <person name="Mandelker D."/>
            <person name="Leary R.J."/>
            <person name="Ptak J."/>
            <person name="Silliman N."/>
            <person name="Szabo S."/>
            <person name="Buckhaults P."/>
            <person name="Farrell C."/>
            <person name="Meeh P."/>
            <person name="Markowitz S.D."/>
            <person name="Willis J."/>
            <person name="Dawson D."/>
            <person name="Willson J.K.V."/>
            <person name="Gazdar A.F."/>
            <person name="Hartigan J."/>
            <person name="Wu L."/>
            <person name="Liu C."/>
            <person name="Parmigiani G."/>
            <person name="Park B.H."/>
            <person name="Bachman K.E."/>
            <person name="Papadopoulos N."/>
            <person name="Vogelstein B."/>
            <person name="Kinzler K.W."/>
            <person name="Velculescu V.E."/>
        </authorList>
    </citation>
    <scope>VARIANT [LARGE SCALE ANALYSIS] LEU-157</scope>
</reference>
<organism>
    <name type="scientific">Homo sapiens</name>
    <name type="common">Human</name>
    <dbReference type="NCBI Taxonomy" id="9606"/>
    <lineage>
        <taxon>Eukaryota</taxon>
        <taxon>Metazoa</taxon>
        <taxon>Chordata</taxon>
        <taxon>Craniata</taxon>
        <taxon>Vertebrata</taxon>
        <taxon>Euteleostomi</taxon>
        <taxon>Mammalia</taxon>
        <taxon>Eutheria</taxon>
        <taxon>Euarchontoglires</taxon>
        <taxon>Primates</taxon>
        <taxon>Haplorrhini</taxon>
        <taxon>Catarrhini</taxon>
        <taxon>Hominidae</taxon>
        <taxon>Homo</taxon>
    </lineage>
</organism>
<comment type="function">
    <text evidence="6 7 9 14">Thiol-specific peroxidase that catalyzes the reduction of hydrogen peroxide and organic hydroperoxides to water and alcohols, respectively. Plays a role in cell protection against oxidative stress by detoxifying peroxides and as sensor of hydrogen peroxide-mediated signaling events.</text>
</comment>
<comment type="catalytic activity">
    <reaction evidence="9">
        <text>a hydroperoxide + [thioredoxin]-dithiol = an alcohol + [thioredoxin]-disulfide + H2O</text>
        <dbReference type="Rhea" id="RHEA:62620"/>
        <dbReference type="Rhea" id="RHEA-COMP:10698"/>
        <dbReference type="Rhea" id="RHEA-COMP:10700"/>
        <dbReference type="ChEBI" id="CHEBI:15377"/>
        <dbReference type="ChEBI" id="CHEBI:29950"/>
        <dbReference type="ChEBI" id="CHEBI:30879"/>
        <dbReference type="ChEBI" id="CHEBI:35924"/>
        <dbReference type="ChEBI" id="CHEBI:50058"/>
        <dbReference type="EC" id="1.11.1.24"/>
    </reaction>
</comment>
<comment type="subunit">
    <text evidence="13">Monomer.</text>
</comment>
<comment type="interaction">
    <interactant intactId="EBI-722161">
        <id>P30044</id>
    </interactant>
    <interactant intactId="EBI-745859">
        <id>P55273</id>
        <label>CDKN2D</label>
    </interactant>
    <organismsDiffer>false</organismsDiffer>
    <experiments>3</experiments>
</comment>
<comment type="interaction">
    <interactant intactId="EBI-722161">
        <id>P30044</id>
    </interactant>
    <interactant intactId="EBI-1210753">
        <id>Q7Z417</id>
        <label>NUFIP2</label>
    </interactant>
    <organismsDiffer>false</organismsDiffer>
    <experiments>3</experiments>
</comment>
<comment type="interaction">
    <interactant intactId="EBI-722161">
        <id>P30044</id>
    </interactant>
    <interactant intactId="EBI-750494">
        <id>P49901</id>
        <label>SMCP</label>
    </interactant>
    <organismsDiffer>false</organismsDiffer>
    <experiments>3</experiments>
</comment>
<comment type="interaction">
    <interactant intactId="EBI-722161">
        <id>P30044</id>
    </interactant>
    <interactant intactId="EBI-990792">
        <id>P00441</id>
        <label>SOD1</label>
    </interactant>
    <organismsDiffer>false</organismsDiffer>
    <experiments>10</experiments>
</comment>
<comment type="interaction">
    <interactant intactId="EBI-10984878">
        <id>P30044-2</id>
    </interactant>
    <interactant intactId="EBI-10984878">
        <id>P30044-2</id>
        <label>PRDX5</label>
    </interactant>
    <organismsDiffer>false</organismsDiffer>
    <experiments>2</experiments>
</comment>
<comment type="subcellular location">
    <molecule>Isoform Mitochondrial</molecule>
    <subcellularLocation>
        <location evidence="7 9 14">Mitochondrion</location>
    </subcellularLocation>
</comment>
<comment type="subcellular location">
    <molecule>Isoform Cytoplasmic+peroxisomal</molecule>
    <subcellularLocation>
        <location evidence="6 9">Cytoplasm</location>
    </subcellularLocation>
    <subcellularLocation>
        <location evidence="6 7 9">Peroxisome matrix</location>
    </subcellularLocation>
    <text evidence="6">Imported into peroxisomes via peroxisomal targeting signal 1 receptor PEX5.</text>
</comment>
<comment type="alternative products">
    <event type="alternative splicing"/>
    <event type="alternative initiation"/>
    <isoform>
        <id>P30044-1</id>
        <name>Mitochondrial</name>
        <sequence type="displayed"/>
    </isoform>
    <isoform>
        <id>P30044-2</id>
        <name>Cytoplasmic+peroxisomal</name>
        <sequence type="described" ref="VSP_018829"/>
    </isoform>
    <isoform>
        <id>P30044-3</id>
        <name>3</name>
        <sequence type="described" ref="VSP_045783"/>
    </isoform>
    <isoform>
        <id>P30044-4</id>
        <name>4</name>
        <sequence type="described" ref="VSP_046682"/>
    </isoform>
</comment>
<comment type="tissue specificity">
    <text evidence="7">Widely expressed.</text>
</comment>
<comment type="PTM">
    <text evidence="14">S-palmitoylated (PubMed:31740833). Palmitoylation occurs on the active site, inhibiting its reactivity; therefore PRDX5 palmitoylation status determines its antioxidant capacity (PubMed:31740833).</text>
</comment>
<comment type="PTM">
    <molecule>Isoform Mitochondrial</molecule>
    <text evidence="14">S-palmitoylated (PubMed:31740833). Depalmitoylated by ABHD10 (PubMed:31740833).</text>
</comment>
<comment type="miscellaneous">
    <text evidence="25 26">The active site is a conserved redox-active cysteine residue, the peroxidatic cysteine (C(P)), which makes the nucleophilic attack on the peroxide substrate. The peroxide oxidizes the C(P)-SH to cysteine sulfenic acid (C(P)-SOH), which then reacts with another cysteine residue, the resolving cysteine (C(R)), to form a disulfide bridge. The disulfide is subsequently reduced by an appropriate electron donor to complete the catalytic cycle. In this atypical 2-Cys Prx, C(R) is present in the same subunit to form an intramolecular disulfide. The disulfide is subsequently reduced by thioredoxin.</text>
</comment>
<comment type="miscellaneous">
    <molecule>Isoform 4</molecule>
    <text evidence="23">Produced by alternative splicing.</text>
</comment>
<comment type="similarity">
    <text evidence="23">Belongs to the peroxiredoxin family. Prx5 subfamily.</text>
</comment>
<comment type="sequence caution" evidence="23">
    <conflict type="frameshift">
        <sequence resource="EMBL-CDS" id="AAF17200"/>
    </conflict>
</comment>
<feature type="transit peptide" description="Mitochondrion" evidence="3">
    <location>
        <begin position="1"/>
        <end position="52"/>
    </location>
</feature>
<feature type="chain" id="PRO_0000023793" description="Peroxiredoxin-5, mitochondrial">
    <location>
        <begin position="53"/>
        <end position="214"/>
    </location>
</feature>
<feature type="domain" description="Thioredoxin" evidence="4">
    <location>
        <begin position="56"/>
        <end position="214"/>
    </location>
</feature>
<feature type="short sequence motif" description="Microbody targeting signal" evidence="24">
    <location>
        <begin position="212"/>
        <end position="214"/>
    </location>
</feature>
<feature type="active site" description="Cysteine sulfenic acid (-SOH) intermediate" evidence="25 27">
    <location>
        <position position="100"/>
    </location>
</feature>
<feature type="modified residue" description="N6-acetyllysine" evidence="1">
    <location>
        <position position="75"/>
    </location>
</feature>
<feature type="modified residue" description="N6-acetyllysine; alternate" evidence="29">
    <location>
        <position position="83"/>
    </location>
</feature>
<feature type="modified residue" description="N6-succinyllysine; alternate" evidence="1">
    <location>
        <position position="83"/>
    </location>
</feature>
<feature type="modified residue" description="N6-succinyllysine" evidence="1">
    <location>
        <position position="116"/>
    </location>
</feature>
<feature type="modified residue" description="Phosphoserine" evidence="2">
    <location>
        <position position="171"/>
    </location>
</feature>
<feature type="modified residue" description="Phosphoserine" evidence="1">
    <location>
        <position position="182"/>
    </location>
</feature>
<feature type="lipid moiety-binding region" description="S-palmitoyl cysteine" evidence="14">
    <location>
        <position position="100"/>
    </location>
</feature>
<feature type="disulfide bond" description="Redox-active" evidence="4 9 12">
    <location>
        <begin position="100"/>
        <end position="204"/>
    </location>
</feature>
<feature type="splice variant" id="VSP_018829" description="In isoform Cytoplasmic+peroxisomal." evidence="18 19 20 22">
    <location>
        <begin position="1"/>
        <end position="52"/>
    </location>
</feature>
<feature type="splice variant" id="VSP_046682" description="In isoform 4." evidence="21">
    <location>
        <begin position="57"/>
        <end position="145"/>
    </location>
</feature>
<feature type="splice variant" id="VSP_045783" description="In isoform 3." evidence="21">
    <location>
        <begin position="102"/>
        <end position="145"/>
    </location>
</feature>
<feature type="sequence variant" id="VAR_025049" description="In dbSNP:rs7938623." evidence="5 7 8 10 15 16 17">
    <original>Y</original>
    <variation>C</variation>
    <location>
        <position position="33"/>
    </location>
</feature>
<feature type="sequence variant" id="VAR_036406" description="In a breast cancer sample; somatic mutation." evidence="11">
    <original>F</original>
    <variation>L</variation>
    <location>
        <position position="157"/>
    </location>
</feature>
<feature type="mutagenesis site" description="Loss of antioxidant activity. Loss of S-palmitoylation." evidence="9 14">
    <original>C</original>
    <variation>S</variation>
    <location>
        <position position="100"/>
    </location>
</feature>
<feature type="mutagenesis site" description="No change in antioxidant activity. No change in S-palmitoylation levels." evidence="9 14">
    <original>C</original>
    <variation>S</variation>
    <location>
        <position position="125"/>
    </location>
</feature>
<feature type="mutagenesis site" description="Loss of antioxidant activity. No change in S-palmitoylation levels." evidence="9 14">
    <original>C</original>
    <variation>S</variation>
    <location>
        <position position="204"/>
    </location>
</feature>
<feature type="sequence conflict" description="In Ref. 4; AAF04856." evidence="23" ref="4">
    <original>H</original>
    <variation>T</variation>
    <location>
        <position position="141"/>
    </location>
</feature>
<feature type="strand" evidence="31">
    <location>
        <begin position="66"/>
        <end position="68"/>
    </location>
</feature>
<feature type="helix" evidence="30">
    <location>
        <begin position="72"/>
        <end position="74"/>
    </location>
</feature>
<feature type="strand" evidence="31">
    <location>
        <begin position="75"/>
        <end position="77"/>
    </location>
</feature>
<feature type="helix" evidence="31">
    <location>
        <begin position="78"/>
        <end position="81"/>
    </location>
</feature>
<feature type="turn" evidence="31">
    <location>
        <begin position="82"/>
        <end position="84"/>
    </location>
</feature>
<feature type="strand" evidence="31">
    <location>
        <begin position="85"/>
        <end position="91"/>
    </location>
</feature>
<feature type="helix" evidence="31">
    <location>
        <begin position="98"/>
        <end position="102"/>
    </location>
</feature>
<feature type="helix" evidence="31">
    <location>
        <begin position="104"/>
        <end position="110"/>
    </location>
</feature>
<feature type="helix" evidence="31">
    <location>
        <begin position="112"/>
        <end position="116"/>
    </location>
</feature>
<feature type="turn" evidence="31">
    <location>
        <begin position="117"/>
        <end position="119"/>
    </location>
</feature>
<feature type="strand" evidence="31">
    <location>
        <begin position="122"/>
        <end position="129"/>
    </location>
</feature>
<feature type="helix" evidence="31">
    <location>
        <begin position="131"/>
        <end position="140"/>
    </location>
</feature>
<feature type="turn" evidence="31">
    <location>
        <begin position="144"/>
        <end position="146"/>
    </location>
</feature>
<feature type="strand" evidence="31">
    <location>
        <begin position="148"/>
        <end position="151"/>
    </location>
</feature>
<feature type="helix" evidence="31">
    <location>
        <begin position="156"/>
        <end position="161"/>
    </location>
</feature>
<feature type="helix" evidence="32">
    <location>
        <begin position="167"/>
        <end position="169"/>
    </location>
</feature>
<feature type="helix" evidence="31">
    <location>
        <begin position="170"/>
        <end position="173"/>
    </location>
</feature>
<feature type="strand" evidence="31">
    <location>
        <begin position="181"/>
        <end position="186"/>
    </location>
</feature>
<feature type="strand" evidence="31">
    <location>
        <begin position="189"/>
        <end position="195"/>
    </location>
</feature>
<feature type="strand" evidence="32">
    <location>
        <begin position="199"/>
        <end position="203"/>
    </location>
</feature>
<feature type="helix" evidence="31">
    <location>
        <begin position="207"/>
        <end position="213"/>
    </location>
</feature>
<sequence length="214" mass="22086">MGLAGVCALRRSAGYILVGGAGGQSAAAAARRYSEGEWASGGVRSFSRAAAAMAPIKVGDAIPAVEVFEGEPGNKVNLAELFKGKKGVLFGVPGAFTPGCSKTHLPGFVEQAEALKAKGVQVVACLSVNDAFVTGEWGRAHKAEGKVRLLADPTGAFGKETDLLLDDSLVSIFGNRRLKRFSMVVQDGIVKALNVEPDGTGLTCSLAPNIISQL</sequence>
<gene>
    <name evidence="28" type="primary">PRDX5</name>
    <name type="synonym">ACR1</name>
    <name type="ORF">SBBI10</name>
</gene>
<protein>
    <recommendedName>
        <fullName>Peroxiredoxin-5, mitochondrial</fullName>
        <ecNumber evidence="9">1.11.1.24</ecNumber>
    </recommendedName>
    <alternativeName>
        <fullName>Alu corepressor 1</fullName>
    </alternativeName>
    <alternativeName>
        <fullName>Antioxidant enzyme B166</fullName>
        <shortName>AOEB166</shortName>
    </alternativeName>
    <alternativeName>
        <fullName>Liver tissue 2D-page spot 71B</fullName>
    </alternativeName>
    <alternativeName>
        <fullName>PLP</fullName>
    </alternativeName>
    <alternativeName>
        <fullName>Peroxiredoxin V</fullName>
        <shortName>Prx-V</shortName>
    </alternativeName>
    <alternativeName>
        <fullName>Peroxisomal antioxidant enzyme</fullName>
    </alternativeName>
    <alternativeName>
        <fullName>TPx type VI</fullName>
    </alternativeName>
    <alternativeName>
        <fullName>Thioredoxin peroxidase PMP20</fullName>
    </alternativeName>
    <alternativeName>
        <fullName evidence="23">Thioredoxin-dependent peroxiredoxin 5</fullName>
    </alternativeName>
</protein>
<proteinExistence type="evidence at protein level"/>
<name>PRDX5_HUMAN</name>
<evidence type="ECO:0000250" key="1">
    <source>
        <dbReference type="UniProtKB" id="P99029"/>
    </source>
</evidence>
<evidence type="ECO:0000250" key="2">
    <source>
        <dbReference type="UniProtKB" id="Q9R063"/>
    </source>
</evidence>
<evidence type="ECO:0000255" key="3"/>
<evidence type="ECO:0000255" key="4">
    <source>
        <dbReference type="PROSITE-ProRule" id="PRU00691"/>
    </source>
</evidence>
<evidence type="ECO:0000269" key="5">
    <source>
    </source>
</evidence>
<evidence type="ECO:0000269" key="6">
    <source>
    </source>
</evidence>
<evidence type="ECO:0000269" key="7">
    <source>
    </source>
</evidence>
<evidence type="ECO:0000269" key="8">
    <source>
    </source>
</evidence>
<evidence type="ECO:0000269" key="9">
    <source>
    </source>
</evidence>
<evidence type="ECO:0000269" key="10">
    <source>
    </source>
</evidence>
<evidence type="ECO:0000269" key="11">
    <source>
    </source>
</evidence>
<evidence type="ECO:0000269" key="12">
    <source>
    </source>
</evidence>
<evidence type="ECO:0000269" key="13">
    <source>
    </source>
</evidence>
<evidence type="ECO:0000269" key="14">
    <source>
    </source>
</evidence>
<evidence type="ECO:0000269" key="15">
    <source ref="10"/>
</evidence>
<evidence type="ECO:0000269" key="16">
    <source ref="7"/>
</evidence>
<evidence type="ECO:0000269" key="17">
    <source ref="9"/>
</evidence>
<evidence type="ECO:0000303" key="18">
    <source>
    </source>
</evidence>
<evidence type="ECO:0000303" key="19">
    <source>
    </source>
</evidence>
<evidence type="ECO:0000303" key="20">
    <source>
    </source>
</evidence>
<evidence type="ECO:0000303" key="21">
    <source>
    </source>
</evidence>
<evidence type="ECO:0000303" key="22">
    <source ref="6"/>
</evidence>
<evidence type="ECO:0000305" key="23"/>
<evidence type="ECO:0000305" key="24">
    <source>
    </source>
</evidence>
<evidence type="ECO:0000305" key="25">
    <source>
    </source>
</evidence>
<evidence type="ECO:0000305" key="26">
    <source>
    </source>
</evidence>
<evidence type="ECO:0000305" key="27">
    <source>
    </source>
</evidence>
<evidence type="ECO:0000312" key="28">
    <source>
        <dbReference type="HGNC" id="HGNC:9355"/>
    </source>
</evidence>
<evidence type="ECO:0007744" key="29">
    <source>
    </source>
</evidence>
<evidence type="ECO:0007829" key="30">
    <source>
        <dbReference type="PDB" id="2VL9"/>
    </source>
</evidence>
<evidence type="ECO:0007829" key="31">
    <source>
        <dbReference type="PDB" id="3MNG"/>
    </source>
</evidence>
<evidence type="ECO:0007829" key="32">
    <source>
        <dbReference type="PDB" id="4MMM"/>
    </source>
</evidence>